<sequence length="94" mass="10189">MLQSNEYFSGKVKSIGFTSSSTGRASVGVMAEGEYTFGTAEPEEMTVVSGALKVLLPGTVEWKVYTAGEVFNVPGHSEFHLQVAEPTSYLCRYL</sequence>
<reference key="1">
    <citation type="journal article" date="2009" name="BMC Genomics">
        <title>Pseudogene accumulation in the evolutionary histories of Salmonella enterica serovars Paratyphi A and Typhi.</title>
        <authorList>
            <person name="Holt K.E."/>
            <person name="Thomson N.R."/>
            <person name="Wain J."/>
            <person name="Langridge G.C."/>
            <person name="Hasan R."/>
            <person name="Bhutta Z.A."/>
            <person name="Quail M.A."/>
            <person name="Norbertczak H."/>
            <person name="Walker D."/>
            <person name="Simmonds M."/>
            <person name="White B."/>
            <person name="Bason N."/>
            <person name="Mungall K."/>
            <person name="Dougan G."/>
            <person name="Parkhill J."/>
        </authorList>
    </citation>
    <scope>NUCLEOTIDE SEQUENCE [LARGE SCALE GENOMIC DNA]</scope>
    <source>
        <strain>AKU_12601</strain>
    </source>
</reference>
<name>PPNP_SALPK</name>
<accession>B5BDE2</accession>
<proteinExistence type="inferred from homology"/>
<keyword id="KW-0328">Glycosyltransferase</keyword>
<keyword id="KW-0808">Transferase</keyword>
<evidence type="ECO:0000255" key="1">
    <source>
        <dbReference type="HAMAP-Rule" id="MF_01537"/>
    </source>
</evidence>
<comment type="function">
    <text evidence="1">Catalyzes the phosphorolysis of diverse nucleosides, yielding D-ribose 1-phosphate and the respective free bases. Can use uridine, adenosine, guanosine, cytidine, thymidine, inosine and xanthosine as substrates. Also catalyzes the reverse reactions.</text>
</comment>
<comment type="catalytic activity">
    <reaction evidence="1">
        <text>a purine D-ribonucleoside + phosphate = a purine nucleobase + alpha-D-ribose 1-phosphate</text>
        <dbReference type="Rhea" id="RHEA:19805"/>
        <dbReference type="ChEBI" id="CHEBI:26386"/>
        <dbReference type="ChEBI" id="CHEBI:43474"/>
        <dbReference type="ChEBI" id="CHEBI:57720"/>
        <dbReference type="ChEBI" id="CHEBI:142355"/>
        <dbReference type="EC" id="2.4.2.1"/>
    </reaction>
</comment>
<comment type="catalytic activity">
    <reaction evidence="1">
        <text>adenosine + phosphate = alpha-D-ribose 1-phosphate + adenine</text>
        <dbReference type="Rhea" id="RHEA:27642"/>
        <dbReference type="ChEBI" id="CHEBI:16335"/>
        <dbReference type="ChEBI" id="CHEBI:16708"/>
        <dbReference type="ChEBI" id="CHEBI:43474"/>
        <dbReference type="ChEBI" id="CHEBI:57720"/>
        <dbReference type="EC" id="2.4.2.1"/>
    </reaction>
</comment>
<comment type="catalytic activity">
    <reaction evidence="1">
        <text>cytidine + phosphate = cytosine + alpha-D-ribose 1-phosphate</text>
        <dbReference type="Rhea" id="RHEA:52540"/>
        <dbReference type="ChEBI" id="CHEBI:16040"/>
        <dbReference type="ChEBI" id="CHEBI:17562"/>
        <dbReference type="ChEBI" id="CHEBI:43474"/>
        <dbReference type="ChEBI" id="CHEBI:57720"/>
        <dbReference type="EC" id="2.4.2.2"/>
    </reaction>
</comment>
<comment type="catalytic activity">
    <reaction evidence="1">
        <text>guanosine + phosphate = alpha-D-ribose 1-phosphate + guanine</text>
        <dbReference type="Rhea" id="RHEA:13233"/>
        <dbReference type="ChEBI" id="CHEBI:16235"/>
        <dbReference type="ChEBI" id="CHEBI:16750"/>
        <dbReference type="ChEBI" id="CHEBI:43474"/>
        <dbReference type="ChEBI" id="CHEBI:57720"/>
        <dbReference type="EC" id="2.4.2.1"/>
    </reaction>
</comment>
<comment type="catalytic activity">
    <reaction evidence="1">
        <text>inosine + phosphate = alpha-D-ribose 1-phosphate + hypoxanthine</text>
        <dbReference type="Rhea" id="RHEA:27646"/>
        <dbReference type="ChEBI" id="CHEBI:17368"/>
        <dbReference type="ChEBI" id="CHEBI:17596"/>
        <dbReference type="ChEBI" id="CHEBI:43474"/>
        <dbReference type="ChEBI" id="CHEBI:57720"/>
        <dbReference type="EC" id="2.4.2.1"/>
    </reaction>
</comment>
<comment type="catalytic activity">
    <reaction evidence="1">
        <text>thymidine + phosphate = 2-deoxy-alpha-D-ribose 1-phosphate + thymine</text>
        <dbReference type="Rhea" id="RHEA:16037"/>
        <dbReference type="ChEBI" id="CHEBI:17748"/>
        <dbReference type="ChEBI" id="CHEBI:17821"/>
        <dbReference type="ChEBI" id="CHEBI:43474"/>
        <dbReference type="ChEBI" id="CHEBI:57259"/>
        <dbReference type="EC" id="2.4.2.2"/>
    </reaction>
</comment>
<comment type="catalytic activity">
    <reaction evidence="1">
        <text>uridine + phosphate = alpha-D-ribose 1-phosphate + uracil</text>
        <dbReference type="Rhea" id="RHEA:24388"/>
        <dbReference type="ChEBI" id="CHEBI:16704"/>
        <dbReference type="ChEBI" id="CHEBI:17568"/>
        <dbReference type="ChEBI" id="CHEBI:43474"/>
        <dbReference type="ChEBI" id="CHEBI:57720"/>
        <dbReference type="EC" id="2.4.2.2"/>
    </reaction>
</comment>
<comment type="catalytic activity">
    <reaction evidence="1">
        <text>xanthosine + phosphate = alpha-D-ribose 1-phosphate + xanthine</text>
        <dbReference type="Rhea" id="RHEA:27638"/>
        <dbReference type="ChEBI" id="CHEBI:17712"/>
        <dbReference type="ChEBI" id="CHEBI:18107"/>
        <dbReference type="ChEBI" id="CHEBI:43474"/>
        <dbReference type="ChEBI" id="CHEBI:57720"/>
        <dbReference type="EC" id="2.4.2.1"/>
    </reaction>
</comment>
<comment type="similarity">
    <text evidence="1">Belongs to the nucleoside phosphorylase PpnP family.</text>
</comment>
<dbReference type="EC" id="2.4.2.1" evidence="1"/>
<dbReference type="EC" id="2.4.2.2" evidence="1"/>
<dbReference type="EMBL" id="FM200053">
    <property type="protein sequence ID" value="CAR60385.1"/>
    <property type="molecule type" value="Genomic_DNA"/>
</dbReference>
<dbReference type="RefSeq" id="WP_000941953.1">
    <property type="nucleotide sequence ID" value="NC_011147.1"/>
</dbReference>
<dbReference type="SMR" id="B5BDE2"/>
<dbReference type="KEGG" id="sek:SSPA2175"/>
<dbReference type="HOGENOM" id="CLU_157874_0_0_6"/>
<dbReference type="Proteomes" id="UP000001869">
    <property type="component" value="Chromosome"/>
</dbReference>
<dbReference type="GO" id="GO:0005829">
    <property type="term" value="C:cytosol"/>
    <property type="evidence" value="ECO:0007669"/>
    <property type="project" value="TreeGrafter"/>
</dbReference>
<dbReference type="GO" id="GO:0047975">
    <property type="term" value="F:guanosine phosphorylase activity"/>
    <property type="evidence" value="ECO:0007669"/>
    <property type="project" value="UniProtKB-EC"/>
</dbReference>
<dbReference type="GO" id="GO:0004731">
    <property type="term" value="F:purine-nucleoside phosphorylase activity"/>
    <property type="evidence" value="ECO:0007669"/>
    <property type="project" value="UniProtKB-UniRule"/>
</dbReference>
<dbReference type="GO" id="GO:0009032">
    <property type="term" value="F:thymidine phosphorylase activity"/>
    <property type="evidence" value="ECO:0007669"/>
    <property type="project" value="UniProtKB-EC"/>
</dbReference>
<dbReference type="GO" id="GO:0004850">
    <property type="term" value="F:uridine phosphorylase activity"/>
    <property type="evidence" value="ECO:0007669"/>
    <property type="project" value="UniProtKB-EC"/>
</dbReference>
<dbReference type="CDD" id="cd20296">
    <property type="entry name" value="cupin_PpnP-like"/>
    <property type="match status" value="1"/>
</dbReference>
<dbReference type="FunFam" id="2.60.120.10:FF:000016">
    <property type="entry name" value="Pyrimidine/purine nucleoside phosphorylase"/>
    <property type="match status" value="1"/>
</dbReference>
<dbReference type="Gene3D" id="2.60.120.10">
    <property type="entry name" value="Jelly Rolls"/>
    <property type="match status" value="1"/>
</dbReference>
<dbReference type="HAMAP" id="MF_01537">
    <property type="entry name" value="Nucleos_phosphorylase_PpnP"/>
    <property type="match status" value="1"/>
</dbReference>
<dbReference type="InterPro" id="IPR009664">
    <property type="entry name" value="Ppnp"/>
</dbReference>
<dbReference type="InterPro" id="IPR014710">
    <property type="entry name" value="RmlC-like_jellyroll"/>
</dbReference>
<dbReference type="InterPro" id="IPR011051">
    <property type="entry name" value="RmlC_Cupin_sf"/>
</dbReference>
<dbReference type="NCBIfam" id="NF007875">
    <property type="entry name" value="PRK10579.1"/>
    <property type="match status" value="1"/>
</dbReference>
<dbReference type="PANTHER" id="PTHR36540">
    <property type="entry name" value="PYRIMIDINE/PURINE NUCLEOSIDE PHOSPHORYLASE"/>
    <property type="match status" value="1"/>
</dbReference>
<dbReference type="PANTHER" id="PTHR36540:SF1">
    <property type="entry name" value="PYRIMIDINE_PURINE NUCLEOSIDE PHOSPHORYLASE"/>
    <property type="match status" value="1"/>
</dbReference>
<dbReference type="Pfam" id="PF06865">
    <property type="entry name" value="Ppnp"/>
    <property type="match status" value="1"/>
</dbReference>
<dbReference type="SUPFAM" id="SSF51182">
    <property type="entry name" value="RmlC-like cupins"/>
    <property type="match status" value="1"/>
</dbReference>
<organism>
    <name type="scientific">Salmonella paratyphi A (strain AKU_12601)</name>
    <dbReference type="NCBI Taxonomy" id="554290"/>
    <lineage>
        <taxon>Bacteria</taxon>
        <taxon>Pseudomonadati</taxon>
        <taxon>Pseudomonadota</taxon>
        <taxon>Gammaproteobacteria</taxon>
        <taxon>Enterobacterales</taxon>
        <taxon>Enterobacteriaceae</taxon>
        <taxon>Salmonella</taxon>
    </lineage>
</organism>
<protein>
    <recommendedName>
        <fullName evidence="1">Pyrimidine/purine nucleoside phosphorylase</fullName>
        <ecNumber evidence="1">2.4.2.1</ecNumber>
        <ecNumber evidence="1">2.4.2.2</ecNumber>
    </recommendedName>
    <alternativeName>
        <fullName evidence="1">Adenosine phosphorylase</fullName>
    </alternativeName>
    <alternativeName>
        <fullName evidence="1">Cytidine phosphorylase</fullName>
    </alternativeName>
    <alternativeName>
        <fullName evidence="1">Guanosine phosphorylase</fullName>
    </alternativeName>
    <alternativeName>
        <fullName evidence="1">Inosine phosphorylase</fullName>
    </alternativeName>
    <alternativeName>
        <fullName evidence="1">Thymidine phosphorylase</fullName>
    </alternativeName>
    <alternativeName>
        <fullName evidence="1">Uridine phosphorylase</fullName>
    </alternativeName>
    <alternativeName>
        <fullName evidence="1">Xanthosine phosphorylase</fullName>
    </alternativeName>
</protein>
<feature type="chain" id="PRO_1000198679" description="Pyrimidine/purine nucleoside phosphorylase">
    <location>
        <begin position="1"/>
        <end position="94"/>
    </location>
</feature>
<gene>
    <name evidence="1" type="primary">ppnP</name>
    <name type="ordered locus">SSPA2175</name>
</gene>